<protein>
    <recommendedName>
        <fullName evidence="1">tRNA 5-methylaminomethyl-2-thiouridine biosynthesis bifunctional protein MnmC</fullName>
        <shortName evidence="1">tRNA mnm(5)s(2)U biosynthesis bifunctional protein</shortName>
    </recommendedName>
    <domain>
        <recommendedName>
            <fullName evidence="1">tRNA (mnm(5)s(2)U34)-methyltransferase</fullName>
            <ecNumber evidence="1">2.1.1.61</ecNumber>
        </recommendedName>
    </domain>
    <domain>
        <recommendedName>
            <fullName evidence="1">FAD-dependent cmnm(5)s(2)U34 oxidoreductase</fullName>
            <ecNumber evidence="1">1.5.-.-</ecNumber>
        </recommendedName>
    </domain>
</protein>
<dbReference type="EC" id="2.1.1.61" evidence="1"/>
<dbReference type="EC" id="1.5.-.-" evidence="1"/>
<dbReference type="EMBL" id="CP000672">
    <property type="protein sequence ID" value="ABQ99176.1"/>
    <property type="molecule type" value="Genomic_DNA"/>
</dbReference>
<dbReference type="SMR" id="A5UEH1"/>
<dbReference type="KEGG" id="hiq:CGSHiGG_00285"/>
<dbReference type="HOGENOM" id="CLU_022427_2_1_6"/>
<dbReference type="Proteomes" id="UP000001990">
    <property type="component" value="Chromosome"/>
</dbReference>
<dbReference type="GO" id="GO:0005737">
    <property type="term" value="C:cytoplasm"/>
    <property type="evidence" value="ECO:0007669"/>
    <property type="project" value="UniProtKB-SubCell"/>
</dbReference>
<dbReference type="GO" id="GO:0050660">
    <property type="term" value="F:flavin adenine dinucleotide binding"/>
    <property type="evidence" value="ECO:0007669"/>
    <property type="project" value="UniProtKB-UniRule"/>
</dbReference>
<dbReference type="GO" id="GO:0016645">
    <property type="term" value="F:oxidoreductase activity, acting on the CH-NH group of donors"/>
    <property type="evidence" value="ECO:0007669"/>
    <property type="project" value="InterPro"/>
</dbReference>
<dbReference type="GO" id="GO:0004808">
    <property type="term" value="F:tRNA (5-methylaminomethyl-2-thiouridylate)(34)-methyltransferase activity"/>
    <property type="evidence" value="ECO:0007669"/>
    <property type="project" value="UniProtKB-EC"/>
</dbReference>
<dbReference type="GO" id="GO:0032259">
    <property type="term" value="P:methylation"/>
    <property type="evidence" value="ECO:0007669"/>
    <property type="project" value="UniProtKB-KW"/>
</dbReference>
<dbReference type="GO" id="GO:0002098">
    <property type="term" value="P:tRNA wobble uridine modification"/>
    <property type="evidence" value="ECO:0007669"/>
    <property type="project" value="TreeGrafter"/>
</dbReference>
<dbReference type="FunFam" id="3.40.50.150:FF:000107">
    <property type="entry name" value="tRNA 5-methylaminomethyl-2-thiouridine biosynthesis bifunctional protein MnmC"/>
    <property type="match status" value="1"/>
</dbReference>
<dbReference type="Gene3D" id="3.30.9.10">
    <property type="entry name" value="D-Amino Acid Oxidase, subunit A, domain 2"/>
    <property type="match status" value="1"/>
</dbReference>
<dbReference type="Gene3D" id="3.50.50.60">
    <property type="entry name" value="FAD/NAD(P)-binding domain"/>
    <property type="match status" value="1"/>
</dbReference>
<dbReference type="Gene3D" id="3.40.50.150">
    <property type="entry name" value="Vaccinia Virus protein VP39"/>
    <property type="match status" value="1"/>
</dbReference>
<dbReference type="HAMAP" id="MF_01102">
    <property type="entry name" value="MnmC"/>
    <property type="match status" value="1"/>
</dbReference>
<dbReference type="InterPro" id="IPR006076">
    <property type="entry name" value="FAD-dep_OxRdtase"/>
</dbReference>
<dbReference type="InterPro" id="IPR036188">
    <property type="entry name" value="FAD/NAD-bd_sf"/>
</dbReference>
<dbReference type="InterPro" id="IPR008471">
    <property type="entry name" value="MnmC-like_methylTransf"/>
</dbReference>
<dbReference type="InterPro" id="IPR029063">
    <property type="entry name" value="SAM-dependent_MTases_sf"/>
</dbReference>
<dbReference type="InterPro" id="IPR023032">
    <property type="entry name" value="tRNA_MAMT_biosynth_bifunc_MnmC"/>
</dbReference>
<dbReference type="InterPro" id="IPR047785">
    <property type="entry name" value="tRNA_MNMC2"/>
</dbReference>
<dbReference type="InterPro" id="IPR017610">
    <property type="entry name" value="tRNA_S-uridine_synth_MnmC_C"/>
</dbReference>
<dbReference type="NCBIfam" id="TIGR03197">
    <property type="entry name" value="MnmC_Cterm"/>
    <property type="match status" value="1"/>
</dbReference>
<dbReference type="NCBIfam" id="NF002481">
    <property type="entry name" value="PRK01747.1-2"/>
    <property type="match status" value="1"/>
</dbReference>
<dbReference type="NCBIfam" id="NF002484">
    <property type="entry name" value="PRK01747.1-5"/>
    <property type="match status" value="1"/>
</dbReference>
<dbReference type="NCBIfam" id="NF033855">
    <property type="entry name" value="tRNA_MNMC2"/>
    <property type="match status" value="1"/>
</dbReference>
<dbReference type="PANTHER" id="PTHR13847">
    <property type="entry name" value="SARCOSINE DEHYDROGENASE-RELATED"/>
    <property type="match status" value="1"/>
</dbReference>
<dbReference type="PANTHER" id="PTHR13847:SF283">
    <property type="entry name" value="TRNA 5-METHYLAMINOMETHYL-2-THIOURIDINE BIOSYNTHESIS BIFUNCTIONAL PROTEIN MNMC"/>
    <property type="match status" value="1"/>
</dbReference>
<dbReference type="Pfam" id="PF01266">
    <property type="entry name" value="DAO"/>
    <property type="match status" value="1"/>
</dbReference>
<dbReference type="Pfam" id="PF05430">
    <property type="entry name" value="Methyltransf_30"/>
    <property type="match status" value="1"/>
</dbReference>
<dbReference type="SUPFAM" id="SSF51905">
    <property type="entry name" value="FAD/NAD(P)-binding domain"/>
    <property type="match status" value="1"/>
</dbReference>
<proteinExistence type="inferred from homology"/>
<gene>
    <name evidence="1" type="primary">mnmC</name>
    <name type="ordered locus">CGSHiGG_00285</name>
</gene>
<organism>
    <name type="scientific">Haemophilus influenzae (strain PittGG)</name>
    <dbReference type="NCBI Taxonomy" id="374931"/>
    <lineage>
        <taxon>Bacteria</taxon>
        <taxon>Pseudomonadati</taxon>
        <taxon>Pseudomonadota</taxon>
        <taxon>Gammaproteobacteria</taxon>
        <taxon>Pasteurellales</taxon>
        <taxon>Pasteurellaceae</taxon>
        <taxon>Haemophilus</taxon>
    </lineage>
</organism>
<reference key="1">
    <citation type="journal article" date="2007" name="Genome Biol.">
        <title>Characterization and modeling of the Haemophilus influenzae core and supragenomes based on the complete genomic sequences of Rd and 12 clinical nontypeable strains.</title>
        <authorList>
            <person name="Hogg J.S."/>
            <person name="Hu F.Z."/>
            <person name="Janto B."/>
            <person name="Boissy R."/>
            <person name="Hayes J."/>
            <person name="Keefe R."/>
            <person name="Post J.C."/>
            <person name="Ehrlich G.D."/>
        </authorList>
    </citation>
    <scope>NUCLEOTIDE SEQUENCE [LARGE SCALE GENOMIC DNA]</scope>
    <source>
        <strain>PittGG</strain>
    </source>
</reference>
<keyword id="KW-0963">Cytoplasm</keyword>
<keyword id="KW-0274">FAD</keyword>
<keyword id="KW-0285">Flavoprotein</keyword>
<keyword id="KW-0489">Methyltransferase</keyword>
<keyword id="KW-0511">Multifunctional enzyme</keyword>
<keyword id="KW-0560">Oxidoreductase</keyword>
<keyword id="KW-0949">S-adenosyl-L-methionine</keyword>
<keyword id="KW-0808">Transferase</keyword>
<keyword id="KW-0819">tRNA processing</keyword>
<sequence>MTFSVQHAEIHFNQNHIPVSDQFDDVYFSNENGLAETDYVFLQGNQLWERWITHKEANFVIAETGFGTGLNFFAATKLFRKFRQQHENHPLKRLNFISFEKYPLKITALSQAHLACPQFEDLSAHLQRYWPSLILGCHRIHFEETTLDLWFGDVSENLPQLGDYMNERIDAWFLDGFAPSKNPEMWNDDLYNLIFRFTKPNGTFATFTAASAVRKGLESAGFNVTKRKGFGKKRECLSGLKIQSKSTALSTPWYLAQPAKMEKQDFAIIGGGIASLCAAISLVKRGAKVTIYCEDAALALNASGNKQGAFYPQLSDDNVLTVDFYLHAFSYGRQLLDWAIEQNIAFEHEFCGVALCAYNEKSAVKLTKISQLGLPNEIFQMLSAEQLSEKVGLPLNCEGGWIEQGAWLAPRQFVQNAFSFLEKQGVIIKTAQKITALSQEEKGWELKNMQGQKYCHEVVILANGHKITDFVQTEKLPLYPIRGQVSQIPTSENLLKLKSVLCYDGYLTPANQLKTSHCIGASHVRDNVDRHFSEQEQQENQQKLQQNIAQPWTQDVNTSDNLARVGIRCSVRDLAPMVGNVPHFEQQQAGYYNLFNLRRRKQPIQSAVNFQNIFLIAALGSRGLTSAPLLGETLASILYGEPLPISEGILHNLSANRAWVKKWLKGSKVE</sequence>
<evidence type="ECO:0000255" key="1">
    <source>
        <dbReference type="HAMAP-Rule" id="MF_01102"/>
    </source>
</evidence>
<name>MNMC_HAEIG</name>
<accession>A5UEH1</accession>
<comment type="function">
    <text evidence="1">Catalyzes the last two steps in the biosynthesis of 5-methylaminomethyl-2-thiouridine (mnm(5)s(2)U) at the wobble position (U34) in tRNA. Catalyzes the FAD-dependent demodification of cmnm(5)s(2)U34 to nm(5)s(2)U34, followed by the transfer of a methyl group from S-adenosyl-L-methionine to nm(5)s(2)U34, to form mnm(5)s(2)U34.</text>
</comment>
<comment type="catalytic activity">
    <reaction evidence="1">
        <text>5-aminomethyl-2-thiouridine(34) in tRNA + S-adenosyl-L-methionine = 5-methylaminomethyl-2-thiouridine(34) in tRNA + S-adenosyl-L-homocysteine + H(+)</text>
        <dbReference type="Rhea" id="RHEA:19569"/>
        <dbReference type="Rhea" id="RHEA-COMP:10195"/>
        <dbReference type="Rhea" id="RHEA-COMP:10197"/>
        <dbReference type="ChEBI" id="CHEBI:15378"/>
        <dbReference type="ChEBI" id="CHEBI:57856"/>
        <dbReference type="ChEBI" id="CHEBI:59789"/>
        <dbReference type="ChEBI" id="CHEBI:74454"/>
        <dbReference type="ChEBI" id="CHEBI:74455"/>
        <dbReference type="EC" id="2.1.1.61"/>
    </reaction>
</comment>
<comment type="cofactor">
    <cofactor evidence="1">
        <name>FAD</name>
        <dbReference type="ChEBI" id="CHEBI:57692"/>
    </cofactor>
</comment>
<comment type="subcellular location">
    <subcellularLocation>
        <location evidence="1">Cytoplasm</location>
    </subcellularLocation>
</comment>
<comment type="similarity">
    <text evidence="1">In the N-terminal section; belongs to the methyltransferase superfamily. tRNA (mnm(5)s(2)U34)-methyltransferase family.</text>
</comment>
<comment type="similarity">
    <text evidence="1">In the C-terminal section; belongs to the DAO family.</text>
</comment>
<feature type="chain" id="PRO_1000064998" description="tRNA 5-methylaminomethyl-2-thiouridine biosynthesis bifunctional protein MnmC">
    <location>
        <begin position="1"/>
        <end position="670"/>
    </location>
</feature>
<feature type="region of interest" description="tRNA (mnm(5)s(2)U34)-methyltransferase">
    <location>
        <begin position="1"/>
        <end position="242"/>
    </location>
</feature>
<feature type="region of interest" description="FAD-dependent cmnm(5)s(2)U34 oxidoreductase">
    <location>
        <begin position="269"/>
        <end position="670"/>
    </location>
</feature>